<accession>Q5ZMK5</accession>
<sequence>MNHKSKKRIREAKRSARPELKDSLDWTRHNYCETFPLSPAACKDNVERADALQLTVEEFVERYEKPYKPVVLLNAQVGWSAQEKWTLERLKRKYRNQKFKCGEDNDGYSVKMKMKYYIEYMETTRDDSPLYIFDSSYGEHPKRRKLLEDYKVPKFFTDDLFQYAGEKRRPPYRWFVMGPPRSGTGIHIDPLGTSAWNALVQGHKRWCLFPTSTPRELIKVAREEGGNQQDEAITWFNVIYPRTQLPTWPPEFKPLEILQKPGETVFVPGGWWHVVLNLDTTIAITQNFASCTNFPVVWHKTVRGRPKLSRKWYRILKQEHPDLAALADSVDLQESTGIASDSSSDSSSSSSSSSSDSDSECDSGSETEGMMHRRKKRRTCSMMGNGDTTSQDDCVSKERSSSRIRESCGGRSYP</sequence>
<comment type="function">
    <text evidence="2 3">Dioxygenase that can both act as a arginine demethylase and a lysyl-hydroxylase. Acts as a lysyl-hydroxylase that catalyzes 5-hydroxylation on specific lysine residues of target proteins such as U2AF2/U2AF65 and LUC7L2. Regulates RNA splicing by mediating 5-hydroxylation of U2AF2/U2AF65, affecting the pre-mRNA splicing activity of U2AF2/U2AF65. Hydroxylates its own N-terminus, which is required for homooligomerization. In addition to peptidyl-lysine 5-dioxygenase activity, may act as an RNA hydroxylase, as suggested by its ability to bind single strand RNA. Also acts as an arginine demethylase which preferentially demethylates asymmetric dimethylation. Demethylates histone H3 at 'Arg-2' (H3R2me) and histone H4 at 'Arg-3' (H4R3me), including mono-, symmetric di- and asymmetric dimethylated forms, thereby playing a role in histone code. However, histone arginine demethylation may not constitute the primary activity in vivo. In collaboration with BRD4, interacts with the positive transcription elongation factor b (P-TEFb) complex in its active form to regulate polymerase II promoter-proximal pause release for transcriptional activation of a large cohort of genes. Demethylates other arginine methylated-proteins such as ESR1. Has no histone lysine demethylase activity (By similarity). Required for differentiation of multiple organs during embryogenesis. Acts as a key regulator of hematopoietic differentiation (By similarity).</text>
</comment>
<comment type="catalytic activity">
    <reaction evidence="2">
        <text>L-lysyl-[protein] + 2-oxoglutarate + O2 = (5S)-5-hydroxy-L-lysyl-[protein] + succinate + CO2</text>
        <dbReference type="Rhea" id="RHEA:58360"/>
        <dbReference type="Rhea" id="RHEA-COMP:9752"/>
        <dbReference type="Rhea" id="RHEA-COMP:15144"/>
        <dbReference type="ChEBI" id="CHEBI:15379"/>
        <dbReference type="ChEBI" id="CHEBI:16526"/>
        <dbReference type="ChEBI" id="CHEBI:16810"/>
        <dbReference type="ChEBI" id="CHEBI:29969"/>
        <dbReference type="ChEBI" id="CHEBI:30031"/>
        <dbReference type="ChEBI" id="CHEBI:141843"/>
    </reaction>
</comment>
<comment type="catalytic activity">
    <reaction evidence="2">
        <text>N(omega),N(omega)'-dimethyl-L-arginyl-[protein] + 2 2-oxoglutarate + 2 O2 = L-arginyl-[protein] + 2 formaldehyde + 2 succinate + 2 CO2</text>
        <dbReference type="Rhea" id="RHEA:58348"/>
        <dbReference type="Rhea" id="RHEA-COMP:10532"/>
        <dbReference type="Rhea" id="RHEA-COMP:11992"/>
        <dbReference type="ChEBI" id="CHEBI:15379"/>
        <dbReference type="ChEBI" id="CHEBI:16526"/>
        <dbReference type="ChEBI" id="CHEBI:16810"/>
        <dbReference type="ChEBI" id="CHEBI:16842"/>
        <dbReference type="ChEBI" id="CHEBI:29965"/>
        <dbReference type="ChEBI" id="CHEBI:30031"/>
        <dbReference type="ChEBI" id="CHEBI:88221"/>
    </reaction>
</comment>
<comment type="catalytic activity">
    <reaction evidence="2">
        <text>N(omega),N(omega)'-dimethyl-L-arginyl-[protein] + 2-oxoglutarate + O2 = N(omega)-methyl-L-arginyl-[protein] + formaldehyde + succinate + CO2</text>
        <dbReference type="Rhea" id="RHEA:58472"/>
        <dbReference type="Rhea" id="RHEA-COMP:11990"/>
        <dbReference type="Rhea" id="RHEA-COMP:11992"/>
        <dbReference type="ChEBI" id="CHEBI:15379"/>
        <dbReference type="ChEBI" id="CHEBI:16526"/>
        <dbReference type="ChEBI" id="CHEBI:16810"/>
        <dbReference type="ChEBI" id="CHEBI:16842"/>
        <dbReference type="ChEBI" id="CHEBI:30031"/>
        <dbReference type="ChEBI" id="CHEBI:65280"/>
        <dbReference type="ChEBI" id="CHEBI:88221"/>
    </reaction>
</comment>
<comment type="catalytic activity">
    <reaction evidence="2">
        <text>a 5'-end methyltriphosphate-guanosine-ribonucleotide-snRNA + 2-oxoglutarate + O2 = a 5'-end triphospho-guanosine-ribonucleotide-snRNA + formaldehyde + succinate + CO2 + H(+)</text>
        <dbReference type="Rhea" id="RHEA:58784"/>
        <dbReference type="Rhea" id="RHEA-COMP:15220"/>
        <dbReference type="Rhea" id="RHEA-COMP:15221"/>
        <dbReference type="ChEBI" id="CHEBI:15378"/>
        <dbReference type="ChEBI" id="CHEBI:15379"/>
        <dbReference type="ChEBI" id="CHEBI:16526"/>
        <dbReference type="ChEBI" id="CHEBI:16810"/>
        <dbReference type="ChEBI" id="CHEBI:16842"/>
        <dbReference type="ChEBI" id="CHEBI:30031"/>
        <dbReference type="ChEBI" id="CHEBI:138278"/>
        <dbReference type="ChEBI" id="CHEBI:142789"/>
    </reaction>
</comment>
<comment type="cofactor">
    <cofactor evidence="2">
        <name>Fe(2+)</name>
        <dbReference type="ChEBI" id="CHEBI:29033"/>
    </cofactor>
    <text evidence="2">Binds 1 Fe(2+) ion per subunit.</text>
</comment>
<comment type="subcellular location">
    <subcellularLocation>
        <location evidence="2">Nucleus</location>
        <location evidence="2">Nucleoplasm</location>
    </subcellularLocation>
    <subcellularLocation>
        <location evidence="2">Nucleus</location>
        <location evidence="2">Nucleolus</location>
    </subcellularLocation>
    <subcellularLocation>
        <location evidence="2">Cytoplasm</location>
    </subcellularLocation>
    <text evidence="2">Mainly found throughout the nucleoplasm outside of regions containing heterochromatic DNA, with some localization in nucleolus. During mitosis, excluded from the nucleus and reappears in the telophase of the cell cycle.</text>
</comment>
<comment type="domain">
    <text evidence="2">The nuclear localization signal motifs are necessary and sufficient to target it into the nucleus.</text>
</comment>
<comment type="PTM">
    <text evidence="2">Hydroxylates its own N-terminus; hydroxylation is required for homooligomerization.</text>
</comment>
<comment type="similarity">
    <text evidence="6">Belongs to the JMJD6 family.</text>
</comment>
<protein>
    <recommendedName>
        <fullName>Bifunctional arginine demethylase and lysyl-hydroxylase JMJD6</fullName>
        <ecNumber>1.14.11.-</ecNumber>
    </recommendedName>
    <alternativeName>
        <fullName>Histone arginine demethylase JMJD6</fullName>
    </alternativeName>
    <alternativeName>
        <fullName>JmjC domain-containing protein 6</fullName>
    </alternativeName>
    <alternativeName>
        <fullName>Jumonji domain-containing protein 6</fullName>
    </alternativeName>
    <alternativeName>
        <fullName>Lysyl-hydroxylase JMJD6</fullName>
    </alternativeName>
    <alternativeName>
        <fullName>Peptide-lysine 5-dioxygenase JMJD6</fullName>
    </alternativeName>
    <alternativeName>
        <fullName>Phosphatidylserine receptor</fullName>
        <shortName>Protein PTDSR</shortName>
    </alternativeName>
</protein>
<dbReference type="EC" id="1.14.11.-"/>
<dbReference type="EMBL" id="AJ719379">
    <property type="protein sequence ID" value="CAG31038.1"/>
    <property type="molecule type" value="mRNA"/>
</dbReference>
<dbReference type="RefSeq" id="NP_001025874.1">
    <property type="nucleotide sequence ID" value="NM_001030703.1"/>
</dbReference>
<dbReference type="SMR" id="Q5ZMK5"/>
<dbReference type="FunCoup" id="Q5ZMK5">
    <property type="interactions" value="755"/>
</dbReference>
<dbReference type="STRING" id="9031.ENSGALP00000002781"/>
<dbReference type="PaxDb" id="9031-ENSGALP00000002781"/>
<dbReference type="GeneID" id="417355"/>
<dbReference type="KEGG" id="gga:417355"/>
<dbReference type="CTD" id="23210"/>
<dbReference type="VEuPathDB" id="HostDB:geneid_417355"/>
<dbReference type="eggNOG" id="KOG2130">
    <property type="taxonomic scope" value="Eukaryota"/>
</dbReference>
<dbReference type="InParanoid" id="Q5ZMK5"/>
<dbReference type="OrthoDB" id="424465at2759"/>
<dbReference type="PhylomeDB" id="Q5ZMK5"/>
<dbReference type="PRO" id="PR:Q5ZMK5"/>
<dbReference type="Proteomes" id="UP000000539">
    <property type="component" value="Unassembled WGS sequence"/>
</dbReference>
<dbReference type="GO" id="GO:0005737">
    <property type="term" value="C:cytoplasm"/>
    <property type="evidence" value="ECO:0000250"/>
    <property type="project" value="UniProtKB"/>
</dbReference>
<dbReference type="GO" id="GO:0005730">
    <property type="term" value="C:nucleolus"/>
    <property type="evidence" value="ECO:0000250"/>
    <property type="project" value="UniProtKB"/>
</dbReference>
<dbReference type="GO" id="GO:0005654">
    <property type="term" value="C:nucleoplasm"/>
    <property type="evidence" value="ECO:0000250"/>
    <property type="project" value="UniProtKB"/>
</dbReference>
<dbReference type="GO" id="GO:0005634">
    <property type="term" value="C:nucleus"/>
    <property type="evidence" value="ECO:0000250"/>
    <property type="project" value="UniProtKB"/>
</dbReference>
<dbReference type="GO" id="GO:0032452">
    <property type="term" value="F:histone demethylase activity"/>
    <property type="evidence" value="ECO:0000250"/>
    <property type="project" value="UniProtKB"/>
</dbReference>
<dbReference type="GO" id="GO:0033746">
    <property type="term" value="F:histone H3R2 demethylase activity"/>
    <property type="evidence" value="ECO:0000250"/>
    <property type="project" value="UniProtKB"/>
</dbReference>
<dbReference type="GO" id="GO:0033749">
    <property type="term" value="F:histone H4R3 demethylase activity"/>
    <property type="evidence" value="ECO:0000250"/>
    <property type="project" value="UniProtKB"/>
</dbReference>
<dbReference type="GO" id="GO:0046872">
    <property type="term" value="F:metal ion binding"/>
    <property type="evidence" value="ECO:0007669"/>
    <property type="project" value="UniProtKB-KW"/>
</dbReference>
<dbReference type="GO" id="GO:0106140">
    <property type="term" value="F:P-TEFb complex binding"/>
    <property type="evidence" value="ECO:0000318"/>
    <property type="project" value="GO_Central"/>
</dbReference>
<dbReference type="GO" id="GO:0070815">
    <property type="term" value="F:peptidyl-lysine 5-dioxygenase activity"/>
    <property type="evidence" value="ECO:0000250"/>
    <property type="project" value="UniProtKB"/>
</dbReference>
<dbReference type="GO" id="GO:0003727">
    <property type="term" value="F:single-stranded RNA binding"/>
    <property type="evidence" value="ECO:0000250"/>
    <property type="project" value="UniProtKB"/>
</dbReference>
<dbReference type="GO" id="GO:0140537">
    <property type="term" value="F:transcription regulator activator activity"/>
    <property type="evidence" value="ECO:0000250"/>
    <property type="project" value="UniProtKB"/>
</dbReference>
<dbReference type="GO" id="GO:0030154">
    <property type="term" value="P:cell differentiation"/>
    <property type="evidence" value="ECO:0007669"/>
    <property type="project" value="UniProtKB-KW"/>
</dbReference>
<dbReference type="GO" id="GO:0006397">
    <property type="term" value="P:mRNA processing"/>
    <property type="evidence" value="ECO:0007669"/>
    <property type="project" value="UniProtKB-KW"/>
</dbReference>
<dbReference type="GO" id="GO:0018395">
    <property type="term" value="P:peptidyl-lysine hydroxylation to 5-hydroxy-L-lysine"/>
    <property type="evidence" value="ECO:0000250"/>
    <property type="project" value="UniProtKB"/>
</dbReference>
<dbReference type="GO" id="GO:0006909">
    <property type="term" value="P:phagocytosis"/>
    <property type="evidence" value="ECO:0000318"/>
    <property type="project" value="GO_Central"/>
</dbReference>
<dbReference type="GO" id="GO:0045893">
    <property type="term" value="P:positive regulation of DNA-templated transcription"/>
    <property type="evidence" value="ECO:0000250"/>
    <property type="project" value="UniProtKB"/>
</dbReference>
<dbReference type="GO" id="GO:0051260">
    <property type="term" value="P:protein homooligomerization"/>
    <property type="evidence" value="ECO:0000250"/>
    <property type="project" value="UniProtKB"/>
</dbReference>
<dbReference type="GO" id="GO:0048024">
    <property type="term" value="P:regulation of mRNA splicing, via spliceosome"/>
    <property type="evidence" value="ECO:0000250"/>
    <property type="project" value="UniProtKB"/>
</dbReference>
<dbReference type="GO" id="GO:0008380">
    <property type="term" value="P:RNA splicing"/>
    <property type="evidence" value="ECO:0007669"/>
    <property type="project" value="UniProtKB-KW"/>
</dbReference>
<dbReference type="GO" id="GO:0002040">
    <property type="term" value="P:sprouting angiogenesis"/>
    <property type="evidence" value="ECO:0000250"/>
    <property type="project" value="UniProtKB"/>
</dbReference>
<dbReference type="FunFam" id="1.20.1280.270:FF:000001">
    <property type="entry name" value="Bifunctional arginine demethylase and lysyl-hydroxylase JMJD6"/>
    <property type="match status" value="1"/>
</dbReference>
<dbReference type="FunFam" id="2.60.120.650:FF:000010">
    <property type="entry name" value="bifunctional arginine demethylase and lysyl-hydroxylase JMJD6 isoform X2"/>
    <property type="match status" value="1"/>
</dbReference>
<dbReference type="Gene3D" id="1.20.1280.270">
    <property type="match status" value="1"/>
</dbReference>
<dbReference type="Gene3D" id="2.60.120.650">
    <property type="entry name" value="Cupin"/>
    <property type="match status" value="1"/>
</dbReference>
<dbReference type="InterPro" id="IPR003347">
    <property type="entry name" value="JmjC_dom"/>
</dbReference>
<dbReference type="InterPro" id="IPR050910">
    <property type="entry name" value="JMJD6_ArgDemeth/LysHydrox"/>
</dbReference>
<dbReference type="PANTHER" id="PTHR12480">
    <property type="entry name" value="ARGININE DEMETHYLASE AND LYSYL-HYDROXYLASE JMJD"/>
    <property type="match status" value="1"/>
</dbReference>
<dbReference type="PANTHER" id="PTHR12480:SF32">
    <property type="entry name" value="BIFUNCTIONAL ARGININE DEMETHYLASE AND LYSYL-HYDROXYLASE JMJD6"/>
    <property type="match status" value="1"/>
</dbReference>
<dbReference type="Pfam" id="PF02373">
    <property type="entry name" value="JmjC"/>
    <property type="match status" value="1"/>
</dbReference>
<dbReference type="SMART" id="SM00558">
    <property type="entry name" value="JmjC"/>
    <property type="match status" value="1"/>
</dbReference>
<dbReference type="SUPFAM" id="SSF51197">
    <property type="entry name" value="Clavaminate synthase-like"/>
    <property type="match status" value="1"/>
</dbReference>
<dbReference type="PROSITE" id="PS51184">
    <property type="entry name" value="JMJC"/>
    <property type="match status" value="1"/>
</dbReference>
<proteinExistence type="evidence at transcript level"/>
<reference key="1">
    <citation type="journal article" date="2005" name="Genome Biol.">
        <title>Full-length cDNAs from chicken bursal lymphocytes to facilitate gene function analysis.</title>
        <authorList>
            <person name="Caldwell R.B."/>
            <person name="Kierzek A.M."/>
            <person name="Arakawa H."/>
            <person name="Bezzubov Y."/>
            <person name="Zaim J."/>
            <person name="Fiedler P."/>
            <person name="Kutter S."/>
            <person name="Blagodatski A."/>
            <person name="Kostovska D."/>
            <person name="Koter M."/>
            <person name="Plachy J."/>
            <person name="Carninci P."/>
            <person name="Hayashizaki Y."/>
            <person name="Buerstedde J.-M."/>
        </authorList>
    </citation>
    <scope>NUCLEOTIDE SEQUENCE [LARGE SCALE MRNA]</scope>
    <source>
        <strain>CB</strain>
        <tissue>Bursa of Fabricius</tissue>
    </source>
</reference>
<feature type="chain" id="PRO_0000129373" description="Bifunctional arginine demethylase and lysyl-hydroxylase JMJD6">
    <location>
        <begin position="1"/>
        <end position="414"/>
    </location>
</feature>
<feature type="domain" description="JmjC" evidence="4">
    <location>
        <begin position="141"/>
        <end position="305"/>
    </location>
</feature>
<feature type="region of interest" description="Disordered" evidence="5">
    <location>
        <begin position="336"/>
        <end position="414"/>
    </location>
</feature>
<feature type="short sequence motif" description="Nuclear localization signal 1" evidence="2">
    <location>
        <begin position="6"/>
        <end position="10"/>
    </location>
</feature>
<feature type="short sequence motif" description="Nuclear localization signal 2" evidence="2">
    <location>
        <begin position="91"/>
        <end position="95"/>
    </location>
</feature>
<feature type="short sequence motif" description="Nuclear localization signal 3" evidence="2">
    <location>
        <begin position="141"/>
        <end position="145"/>
    </location>
</feature>
<feature type="short sequence motif" description="Nuclear localization signal 4" evidence="2">
    <location>
        <begin position="167"/>
        <end position="170"/>
    </location>
</feature>
<feature type="short sequence motif" description="Nuclear localization signal 5" evidence="2">
    <location>
        <begin position="373"/>
        <end position="378"/>
    </location>
</feature>
<feature type="compositionally biased region" description="Low complexity" evidence="5">
    <location>
        <begin position="340"/>
        <end position="356"/>
    </location>
</feature>
<feature type="compositionally biased region" description="Basic and acidic residues" evidence="5">
    <location>
        <begin position="394"/>
        <end position="408"/>
    </location>
</feature>
<feature type="binding site" evidence="1">
    <location>
        <position position="184"/>
    </location>
    <ligand>
        <name>substrate</name>
    </ligand>
</feature>
<feature type="binding site" evidence="4">
    <location>
        <position position="187"/>
    </location>
    <ligand>
        <name>Fe cation</name>
        <dbReference type="ChEBI" id="CHEBI:24875"/>
        <note>catalytic</note>
    </ligand>
</feature>
<feature type="binding site" evidence="4">
    <location>
        <position position="189"/>
    </location>
    <ligand>
        <name>Fe cation</name>
        <dbReference type="ChEBI" id="CHEBI:24875"/>
        <note>catalytic</note>
    </ligand>
</feature>
<feature type="binding site" evidence="2">
    <location>
        <position position="197"/>
    </location>
    <ligand>
        <name>2-oxoglutarate</name>
        <dbReference type="ChEBI" id="CHEBI:16810"/>
    </ligand>
</feature>
<feature type="binding site" evidence="1">
    <location>
        <position position="204"/>
    </location>
    <ligand>
        <name>substrate</name>
    </ligand>
</feature>
<feature type="binding site" evidence="4">
    <location>
        <position position="273"/>
    </location>
    <ligand>
        <name>Fe cation</name>
        <dbReference type="ChEBI" id="CHEBI:24875"/>
        <note>catalytic</note>
    </ligand>
</feature>
<feature type="binding site" evidence="2">
    <location>
        <position position="285"/>
    </location>
    <ligand>
        <name>2-oxoglutarate</name>
        <dbReference type="ChEBI" id="CHEBI:16810"/>
    </ligand>
</feature>
<evidence type="ECO:0000250" key="1"/>
<evidence type="ECO:0000250" key="2">
    <source>
        <dbReference type="UniProtKB" id="Q6NYC1"/>
    </source>
</evidence>
<evidence type="ECO:0000250" key="3">
    <source>
        <dbReference type="UniProtKB" id="Q9ERI5"/>
    </source>
</evidence>
<evidence type="ECO:0000255" key="4">
    <source>
        <dbReference type="PROSITE-ProRule" id="PRU00538"/>
    </source>
</evidence>
<evidence type="ECO:0000256" key="5">
    <source>
        <dbReference type="SAM" id="MobiDB-lite"/>
    </source>
</evidence>
<evidence type="ECO:0000305" key="6"/>
<keyword id="KW-0156">Chromatin regulator</keyword>
<keyword id="KW-0963">Cytoplasm</keyword>
<keyword id="KW-0217">Developmental protein</keyword>
<keyword id="KW-0221">Differentiation</keyword>
<keyword id="KW-0223">Dioxygenase</keyword>
<keyword id="KW-0408">Iron</keyword>
<keyword id="KW-0479">Metal-binding</keyword>
<keyword id="KW-0507">mRNA processing</keyword>
<keyword id="KW-0508">mRNA splicing</keyword>
<keyword id="KW-0539">Nucleus</keyword>
<keyword id="KW-0560">Oxidoreductase</keyword>
<keyword id="KW-1185">Reference proteome</keyword>
<keyword id="KW-0694">RNA-binding</keyword>
<keyword id="KW-0804">Transcription</keyword>
<keyword id="KW-0805">Transcription regulation</keyword>
<gene>
    <name type="primary">JMJD6</name>
    <name type="synonym">PTDSR</name>
    <name type="ORF">RCJMB04_1m8</name>
</gene>
<name>JMJD6_CHICK</name>
<organism>
    <name type="scientific">Gallus gallus</name>
    <name type="common">Chicken</name>
    <dbReference type="NCBI Taxonomy" id="9031"/>
    <lineage>
        <taxon>Eukaryota</taxon>
        <taxon>Metazoa</taxon>
        <taxon>Chordata</taxon>
        <taxon>Craniata</taxon>
        <taxon>Vertebrata</taxon>
        <taxon>Euteleostomi</taxon>
        <taxon>Archelosauria</taxon>
        <taxon>Archosauria</taxon>
        <taxon>Dinosauria</taxon>
        <taxon>Saurischia</taxon>
        <taxon>Theropoda</taxon>
        <taxon>Coelurosauria</taxon>
        <taxon>Aves</taxon>
        <taxon>Neognathae</taxon>
        <taxon>Galloanserae</taxon>
        <taxon>Galliformes</taxon>
        <taxon>Phasianidae</taxon>
        <taxon>Phasianinae</taxon>
        <taxon>Gallus</taxon>
    </lineage>
</organism>